<reference key="1">
    <citation type="submission" date="2008-04" db="EMBL/GenBank/DDBJ databases">
        <title>Complete sequence of Yersinia pseudotuberculosis PB1/+.</title>
        <authorList>
            <person name="Copeland A."/>
            <person name="Lucas S."/>
            <person name="Lapidus A."/>
            <person name="Glavina del Rio T."/>
            <person name="Dalin E."/>
            <person name="Tice H."/>
            <person name="Bruce D."/>
            <person name="Goodwin L."/>
            <person name="Pitluck S."/>
            <person name="Munk A.C."/>
            <person name="Brettin T."/>
            <person name="Detter J.C."/>
            <person name="Han C."/>
            <person name="Tapia R."/>
            <person name="Schmutz J."/>
            <person name="Larimer F."/>
            <person name="Land M."/>
            <person name="Hauser L."/>
            <person name="Challacombe J.F."/>
            <person name="Green L."/>
            <person name="Lindler L.E."/>
            <person name="Nikolich M.P."/>
            <person name="Richardson P."/>
        </authorList>
    </citation>
    <scope>NUCLEOTIDE SEQUENCE [LARGE SCALE GENOMIC DNA]</scope>
    <source>
        <strain>PB1/+</strain>
    </source>
</reference>
<name>MTNB_YERPB</name>
<dbReference type="EC" id="4.2.1.109" evidence="1"/>
<dbReference type="EMBL" id="CP001048">
    <property type="protein sequence ID" value="ACC87896.1"/>
    <property type="molecule type" value="Genomic_DNA"/>
</dbReference>
<dbReference type="RefSeq" id="WP_011191831.1">
    <property type="nucleotide sequence ID" value="NZ_CP009780.1"/>
</dbReference>
<dbReference type="SMR" id="B2K630"/>
<dbReference type="KEGG" id="ypb:YPTS_0915"/>
<dbReference type="PATRIC" id="fig|502801.10.peg.248"/>
<dbReference type="UniPathway" id="UPA00904">
    <property type="reaction ID" value="UER00875"/>
</dbReference>
<dbReference type="GO" id="GO:0005737">
    <property type="term" value="C:cytoplasm"/>
    <property type="evidence" value="ECO:0007669"/>
    <property type="project" value="InterPro"/>
</dbReference>
<dbReference type="GO" id="GO:0046570">
    <property type="term" value="F:methylthioribulose 1-phosphate dehydratase activity"/>
    <property type="evidence" value="ECO:0007669"/>
    <property type="project" value="UniProtKB-UniRule"/>
</dbReference>
<dbReference type="GO" id="GO:0008270">
    <property type="term" value="F:zinc ion binding"/>
    <property type="evidence" value="ECO:0007669"/>
    <property type="project" value="UniProtKB-UniRule"/>
</dbReference>
<dbReference type="GO" id="GO:0019509">
    <property type="term" value="P:L-methionine salvage from methylthioadenosine"/>
    <property type="evidence" value="ECO:0007669"/>
    <property type="project" value="UniProtKB-UniRule"/>
</dbReference>
<dbReference type="GO" id="GO:0005996">
    <property type="term" value="P:monosaccharide metabolic process"/>
    <property type="evidence" value="ECO:0007669"/>
    <property type="project" value="UniProtKB-ARBA"/>
</dbReference>
<dbReference type="Gene3D" id="3.40.225.10">
    <property type="entry name" value="Class II aldolase/adducin N-terminal domain"/>
    <property type="match status" value="1"/>
</dbReference>
<dbReference type="HAMAP" id="MF_01677">
    <property type="entry name" value="Salvage_MtnB"/>
    <property type="match status" value="1"/>
</dbReference>
<dbReference type="InterPro" id="IPR001303">
    <property type="entry name" value="Aldolase_II/adducin_N"/>
</dbReference>
<dbReference type="InterPro" id="IPR036409">
    <property type="entry name" value="Aldolase_II/adducin_N_sf"/>
</dbReference>
<dbReference type="InterPro" id="IPR017714">
    <property type="entry name" value="MethylthioRu-1-P_deHdtase_MtnB"/>
</dbReference>
<dbReference type="NCBIfam" id="NF006672">
    <property type="entry name" value="PRK09220.1"/>
    <property type="match status" value="1"/>
</dbReference>
<dbReference type="NCBIfam" id="TIGR03328">
    <property type="entry name" value="salvage_mtnB"/>
    <property type="match status" value="1"/>
</dbReference>
<dbReference type="PANTHER" id="PTHR10640">
    <property type="entry name" value="METHYLTHIORIBULOSE-1-PHOSPHATE DEHYDRATASE"/>
    <property type="match status" value="1"/>
</dbReference>
<dbReference type="PANTHER" id="PTHR10640:SF7">
    <property type="entry name" value="METHYLTHIORIBULOSE-1-PHOSPHATE DEHYDRATASE"/>
    <property type="match status" value="1"/>
</dbReference>
<dbReference type="Pfam" id="PF00596">
    <property type="entry name" value="Aldolase_II"/>
    <property type="match status" value="1"/>
</dbReference>
<dbReference type="SMART" id="SM01007">
    <property type="entry name" value="Aldolase_II"/>
    <property type="match status" value="1"/>
</dbReference>
<dbReference type="SUPFAM" id="SSF53639">
    <property type="entry name" value="AraD/HMP-PK domain-like"/>
    <property type="match status" value="1"/>
</dbReference>
<sequence length="222" mass="24613">MTENRQLGALLAACHWIGEKGWCPATGGNMSLRLDLAHCLITESGKDKGSLAAEDFLLVETANNHVPSGRTPSAETGLHTLLYRLYPEIQAVLHTHSVNATVLSRVERSNALVLQGYEMQKSLSGQRSHLDAVVIPIFDNDQDIPVLAQRVAAYADNRPLQYGFLVRGHGLYCWGNSVVEARRHLEGLEFLFQCELQRRLFDVNSNVDVKPNVDVNPNVEAK</sequence>
<proteinExistence type="inferred from homology"/>
<feature type="chain" id="PRO_0000357126" description="Methylthioribulose-1-phosphate dehydratase">
    <location>
        <begin position="1"/>
        <end position="222"/>
    </location>
</feature>
<feature type="binding site" evidence="1">
    <location>
        <position position="94"/>
    </location>
    <ligand>
        <name>Zn(2+)</name>
        <dbReference type="ChEBI" id="CHEBI:29105"/>
    </ligand>
</feature>
<feature type="binding site" evidence="1">
    <location>
        <position position="96"/>
    </location>
    <ligand>
        <name>Zn(2+)</name>
        <dbReference type="ChEBI" id="CHEBI:29105"/>
    </ligand>
</feature>
<gene>
    <name evidence="1" type="primary">mtnB</name>
    <name type="ordered locus">YPTS_0915</name>
</gene>
<comment type="function">
    <text evidence="1">Catalyzes the dehydration of methylthioribulose-1-phosphate (MTRu-1-P) into 2,3-diketo-5-methylthiopentyl-1-phosphate (DK-MTP-1-P).</text>
</comment>
<comment type="catalytic activity">
    <reaction evidence="1">
        <text>5-(methylsulfanyl)-D-ribulose 1-phosphate = 5-methylsulfanyl-2,3-dioxopentyl phosphate + H2O</text>
        <dbReference type="Rhea" id="RHEA:15549"/>
        <dbReference type="ChEBI" id="CHEBI:15377"/>
        <dbReference type="ChEBI" id="CHEBI:58548"/>
        <dbReference type="ChEBI" id="CHEBI:58828"/>
        <dbReference type="EC" id="4.2.1.109"/>
    </reaction>
</comment>
<comment type="cofactor">
    <cofactor evidence="1">
        <name>Zn(2+)</name>
        <dbReference type="ChEBI" id="CHEBI:29105"/>
    </cofactor>
    <text evidence="1">Binds 1 zinc ion per subunit.</text>
</comment>
<comment type="pathway">
    <text evidence="1">Amino-acid biosynthesis; L-methionine biosynthesis via salvage pathway; L-methionine from S-methyl-5-thio-alpha-D-ribose 1-phosphate: step 2/6.</text>
</comment>
<comment type="similarity">
    <text evidence="1">Belongs to the aldolase class II family. MtnB subfamily.</text>
</comment>
<keyword id="KW-0028">Amino-acid biosynthesis</keyword>
<keyword id="KW-0456">Lyase</keyword>
<keyword id="KW-0479">Metal-binding</keyword>
<keyword id="KW-0486">Methionine biosynthesis</keyword>
<keyword id="KW-0862">Zinc</keyword>
<organism>
    <name type="scientific">Yersinia pseudotuberculosis serotype IB (strain PB1/+)</name>
    <dbReference type="NCBI Taxonomy" id="502801"/>
    <lineage>
        <taxon>Bacteria</taxon>
        <taxon>Pseudomonadati</taxon>
        <taxon>Pseudomonadota</taxon>
        <taxon>Gammaproteobacteria</taxon>
        <taxon>Enterobacterales</taxon>
        <taxon>Yersiniaceae</taxon>
        <taxon>Yersinia</taxon>
    </lineage>
</organism>
<protein>
    <recommendedName>
        <fullName evidence="1">Methylthioribulose-1-phosphate dehydratase</fullName>
        <shortName evidence="1">MTRu-1-P dehydratase</shortName>
        <ecNumber evidence="1">4.2.1.109</ecNumber>
    </recommendedName>
</protein>
<accession>B2K630</accession>
<evidence type="ECO:0000255" key="1">
    <source>
        <dbReference type="HAMAP-Rule" id="MF_01677"/>
    </source>
</evidence>